<keyword id="KW-0067">ATP-binding</keyword>
<keyword id="KW-0342">GTP-binding</keyword>
<keyword id="KW-0547">Nucleotide-binding</keyword>
<evidence type="ECO:0000255" key="1">
    <source>
        <dbReference type="HAMAP-Rule" id="MF_00636"/>
    </source>
</evidence>
<feature type="chain" id="PRO_0000107684" description="Nucleotide-binding protein BCE33L4848">
    <location>
        <begin position="1"/>
        <end position="293"/>
    </location>
</feature>
<feature type="binding site" evidence="1">
    <location>
        <begin position="14"/>
        <end position="21"/>
    </location>
    <ligand>
        <name>ATP</name>
        <dbReference type="ChEBI" id="CHEBI:30616"/>
    </ligand>
</feature>
<feature type="binding site" evidence="1">
    <location>
        <begin position="65"/>
        <end position="68"/>
    </location>
    <ligand>
        <name>GTP</name>
        <dbReference type="ChEBI" id="CHEBI:37565"/>
    </ligand>
</feature>
<comment type="function">
    <text evidence="1">Displays ATPase and GTPase activities.</text>
</comment>
<comment type="similarity">
    <text evidence="1">Belongs to the RapZ-like family.</text>
</comment>
<accession>Q631J8</accession>
<reference key="1">
    <citation type="journal article" date="2006" name="J. Bacteriol.">
        <title>Pathogenomic sequence analysis of Bacillus cereus and Bacillus thuringiensis isolates closely related to Bacillus anthracis.</title>
        <authorList>
            <person name="Han C.S."/>
            <person name="Xie G."/>
            <person name="Challacombe J.F."/>
            <person name="Altherr M.R."/>
            <person name="Bhotika S.S."/>
            <person name="Bruce D."/>
            <person name="Campbell C.S."/>
            <person name="Campbell M.L."/>
            <person name="Chen J."/>
            <person name="Chertkov O."/>
            <person name="Cleland C."/>
            <person name="Dimitrijevic M."/>
            <person name="Doggett N.A."/>
            <person name="Fawcett J.J."/>
            <person name="Glavina T."/>
            <person name="Goodwin L.A."/>
            <person name="Hill K.K."/>
            <person name="Hitchcock P."/>
            <person name="Jackson P.J."/>
            <person name="Keim P."/>
            <person name="Kewalramani A.R."/>
            <person name="Longmire J."/>
            <person name="Lucas S."/>
            <person name="Malfatti S."/>
            <person name="McMurry K."/>
            <person name="Meincke L.J."/>
            <person name="Misra M."/>
            <person name="Moseman B.L."/>
            <person name="Mundt M."/>
            <person name="Munk A.C."/>
            <person name="Okinaka R.T."/>
            <person name="Parson-Quintana B."/>
            <person name="Reilly L.P."/>
            <person name="Richardson P."/>
            <person name="Robinson D.L."/>
            <person name="Rubin E."/>
            <person name="Saunders E."/>
            <person name="Tapia R."/>
            <person name="Tesmer J.G."/>
            <person name="Thayer N."/>
            <person name="Thompson L.S."/>
            <person name="Tice H."/>
            <person name="Ticknor L.O."/>
            <person name="Wills P.L."/>
            <person name="Brettin T.S."/>
            <person name="Gilna P."/>
        </authorList>
    </citation>
    <scope>NUCLEOTIDE SEQUENCE [LARGE SCALE GENOMIC DNA]</scope>
    <source>
        <strain>ZK / E33L</strain>
    </source>
</reference>
<proteinExistence type="inferred from homology"/>
<dbReference type="EMBL" id="CP000001">
    <property type="protein sequence ID" value="AAU15430.1"/>
    <property type="molecule type" value="Genomic_DNA"/>
</dbReference>
<dbReference type="SMR" id="Q631J8"/>
<dbReference type="KEGG" id="bcz:BCE33L4848"/>
<dbReference type="PATRIC" id="fig|288681.22.peg.505"/>
<dbReference type="Proteomes" id="UP000002612">
    <property type="component" value="Chromosome"/>
</dbReference>
<dbReference type="GO" id="GO:0005524">
    <property type="term" value="F:ATP binding"/>
    <property type="evidence" value="ECO:0007669"/>
    <property type="project" value="UniProtKB-UniRule"/>
</dbReference>
<dbReference type="GO" id="GO:0005525">
    <property type="term" value="F:GTP binding"/>
    <property type="evidence" value="ECO:0007669"/>
    <property type="project" value="UniProtKB-UniRule"/>
</dbReference>
<dbReference type="Gene3D" id="3.40.50.300">
    <property type="entry name" value="P-loop containing nucleotide triphosphate hydrolases"/>
    <property type="match status" value="1"/>
</dbReference>
<dbReference type="HAMAP" id="MF_00636">
    <property type="entry name" value="RapZ_like"/>
    <property type="match status" value="1"/>
</dbReference>
<dbReference type="InterPro" id="IPR027417">
    <property type="entry name" value="P-loop_NTPase"/>
</dbReference>
<dbReference type="InterPro" id="IPR005337">
    <property type="entry name" value="RapZ-like"/>
</dbReference>
<dbReference type="InterPro" id="IPR053930">
    <property type="entry name" value="RapZ-like_N"/>
</dbReference>
<dbReference type="InterPro" id="IPR053931">
    <property type="entry name" value="RapZ_C"/>
</dbReference>
<dbReference type="NCBIfam" id="NF003828">
    <property type="entry name" value="PRK05416.1"/>
    <property type="match status" value="1"/>
</dbReference>
<dbReference type="PANTHER" id="PTHR30448">
    <property type="entry name" value="RNASE ADAPTER PROTEIN RAPZ"/>
    <property type="match status" value="1"/>
</dbReference>
<dbReference type="PANTHER" id="PTHR30448:SF0">
    <property type="entry name" value="RNASE ADAPTER PROTEIN RAPZ"/>
    <property type="match status" value="1"/>
</dbReference>
<dbReference type="Pfam" id="PF22740">
    <property type="entry name" value="PapZ_C"/>
    <property type="match status" value="1"/>
</dbReference>
<dbReference type="Pfam" id="PF03668">
    <property type="entry name" value="RapZ-like_N"/>
    <property type="match status" value="1"/>
</dbReference>
<dbReference type="PIRSF" id="PIRSF005052">
    <property type="entry name" value="P-loopkin"/>
    <property type="match status" value="1"/>
</dbReference>
<dbReference type="SUPFAM" id="SSF52540">
    <property type="entry name" value="P-loop containing nucleoside triphosphate hydrolases"/>
    <property type="match status" value="1"/>
</dbReference>
<sequence>MTENNDIKMVIITGMSGAGKTVALQSFEDLGYFCVDNLPPMLLPKFIELMADSKGKMNKVALGVDLRGREFFEHLWGALDDLSERTWIIPHILFLDAKDSTLVTRYKETRRSHPLAPTGLPLKGIEIERSLLTDMKARANIVLDTSDLKPKELREKIVHLFSTETEQAFRVNVMSFGFKYGIPIDADLVFDVRFLPNPYYIPHMKPLTGLDEEVSSYVLKFNETHKFLEKLTDLITFMLPHYKREGKSQLVIAIGCTGGQHRSVTLTEYLGKHLKPEYSVHVSHRDVEKRKGH</sequence>
<gene>
    <name type="ordered locus">BCE33L4848</name>
</gene>
<organism>
    <name type="scientific">Bacillus cereus (strain ZK / E33L)</name>
    <dbReference type="NCBI Taxonomy" id="288681"/>
    <lineage>
        <taxon>Bacteria</taxon>
        <taxon>Bacillati</taxon>
        <taxon>Bacillota</taxon>
        <taxon>Bacilli</taxon>
        <taxon>Bacillales</taxon>
        <taxon>Bacillaceae</taxon>
        <taxon>Bacillus</taxon>
        <taxon>Bacillus cereus group</taxon>
    </lineage>
</organism>
<name>Y4848_BACCZ</name>
<protein>
    <recommendedName>
        <fullName evidence="1">Nucleotide-binding protein BCE33L4848</fullName>
    </recommendedName>
</protein>